<keyword id="KW-0028">Amino-acid biosynthesis</keyword>
<keyword id="KW-0055">Arginine biosynthesis</keyword>
<keyword id="KW-0067">ATP-binding</keyword>
<keyword id="KW-0963">Cytoplasm</keyword>
<keyword id="KW-0436">Ligase</keyword>
<keyword id="KW-0547">Nucleotide-binding</keyword>
<protein>
    <recommendedName>
        <fullName evidence="1">Argininosuccinate synthase</fullName>
        <ecNumber evidence="1">6.3.4.5</ecNumber>
    </recommendedName>
    <alternativeName>
        <fullName evidence="1">Citrulline--aspartate ligase</fullName>
    </alternativeName>
</protein>
<feature type="chain" id="PRO_1000212129" description="Argininosuccinate synthase">
    <location>
        <begin position="1"/>
        <end position="447"/>
    </location>
</feature>
<feature type="binding site" evidence="1">
    <location>
        <begin position="17"/>
        <end position="25"/>
    </location>
    <ligand>
        <name>ATP</name>
        <dbReference type="ChEBI" id="CHEBI:30616"/>
    </ligand>
</feature>
<feature type="binding site" evidence="1">
    <location>
        <position position="43"/>
    </location>
    <ligand>
        <name>ATP</name>
        <dbReference type="ChEBI" id="CHEBI:30616"/>
    </ligand>
</feature>
<feature type="binding site" evidence="1">
    <location>
        <position position="99"/>
    </location>
    <ligand>
        <name>L-citrulline</name>
        <dbReference type="ChEBI" id="CHEBI:57743"/>
    </ligand>
</feature>
<feature type="binding site" evidence="1">
    <location>
        <position position="129"/>
    </location>
    <ligand>
        <name>ATP</name>
        <dbReference type="ChEBI" id="CHEBI:30616"/>
    </ligand>
</feature>
<feature type="binding site" evidence="1">
    <location>
        <position position="131"/>
    </location>
    <ligand>
        <name>ATP</name>
        <dbReference type="ChEBI" id="CHEBI:30616"/>
    </ligand>
</feature>
<feature type="binding site" evidence="1">
    <location>
        <position position="131"/>
    </location>
    <ligand>
        <name>L-aspartate</name>
        <dbReference type="ChEBI" id="CHEBI:29991"/>
    </ligand>
</feature>
<feature type="binding site" evidence="1">
    <location>
        <position position="135"/>
    </location>
    <ligand>
        <name>L-aspartate</name>
        <dbReference type="ChEBI" id="CHEBI:29991"/>
    </ligand>
</feature>
<feature type="binding site" evidence="1">
    <location>
        <position position="135"/>
    </location>
    <ligand>
        <name>L-citrulline</name>
        <dbReference type="ChEBI" id="CHEBI:57743"/>
    </ligand>
</feature>
<feature type="binding site" evidence="1">
    <location>
        <position position="136"/>
    </location>
    <ligand>
        <name>ATP</name>
        <dbReference type="ChEBI" id="CHEBI:30616"/>
    </ligand>
</feature>
<feature type="binding site" evidence="1">
    <location>
        <position position="136"/>
    </location>
    <ligand>
        <name>L-aspartate</name>
        <dbReference type="ChEBI" id="CHEBI:29991"/>
    </ligand>
</feature>
<feature type="binding site" evidence="1">
    <location>
        <position position="139"/>
    </location>
    <ligand>
        <name>L-citrulline</name>
        <dbReference type="ChEBI" id="CHEBI:57743"/>
    </ligand>
</feature>
<feature type="binding site" evidence="1">
    <location>
        <position position="192"/>
    </location>
    <ligand>
        <name>L-citrulline</name>
        <dbReference type="ChEBI" id="CHEBI:57743"/>
    </ligand>
</feature>
<feature type="binding site" evidence="1">
    <location>
        <position position="194"/>
    </location>
    <ligand>
        <name>ATP</name>
        <dbReference type="ChEBI" id="CHEBI:30616"/>
    </ligand>
</feature>
<feature type="binding site" evidence="1">
    <location>
        <position position="201"/>
    </location>
    <ligand>
        <name>L-citrulline</name>
        <dbReference type="ChEBI" id="CHEBI:57743"/>
    </ligand>
</feature>
<feature type="binding site" evidence="1">
    <location>
        <position position="203"/>
    </location>
    <ligand>
        <name>L-citrulline</name>
        <dbReference type="ChEBI" id="CHEBI:57743"/>
    </ligand>
</feature>
<feature type="binding site" evidence="1">
    <location>
        <position position="280"/>
    </location>
    <ligand>
        <name>L-citrulline</name>
        <dbReference type="ChEBI" id="CHEBI:57743"/>
    </ligand>
</feature>
<comment type="catalytic activity">
    <reaction evidence="1">
        <text>L-citrulline + L-aspartate + ATP = 2-(N(omega)-L-arginino)succinate + AMP + diphosphate + H(+)</text>
        <dbReference type="Rhea" id="RHEA:10932"/>
        <dbReference type="ChEBI" id="CHEBI:15378"/>
        <dbReference type="ChEBI" id="CHEBI:29991"/>
        <dbReference type="ChEBI" id="CHEBI:30616"/>
        <dbReference type="ChEBI" id="CHEBI:33019"/>
        <dbReference type="ChEBI" id="CHEBI:57472"/>
        <dbReference type="ChEBI" id="CHEBI:57743"/>
        <dbReference type="ChEBI" id="CHEBI:456215"/>
        <dbReference type="EC" id="6.3.4.5"/>
    </reaction>
</comment>
<comment type="pathway">
    <text evidence="1">Amino-acid biosynthesis; L-arginine biosynthesis; L-arginine from L-ornithine and carbamoyl phosphate: step 2/3.</text>
</comment>
<comment type="subunit">
    <text evidence="1">Homotetramer.</text>
</comment>
<comment type="subcellular location">
    <subcellularLocation>
        <location evidence="1">Cytoplasm</location>
    </subcellularLocation>
</comment>
<comment type="similarity">
    <text evidence="1">Belongs to the argininosuccinate synthase family. Type 2 subfamily.</text>
</comment>
<reference key="1">
    <citation type="journal article" date="2009" name="J. Bacteriol.">
        <title>Genomic sequencing reveals regulatory mutations and recombinational events in the widely used MC4100 lineage of Escherichia coli K-12.</title>
        <authorList>
            <person name="Ferenci T."/>
            <person name="Zhou Z."/>
            <person name="Betteridge T."/>
            <person name="Ren Y."/>
            <person name="Liu Y."/>
            <person name="Feng L."/>
            <person name="Reeves P.R."/>
            <person name="Wang L."/>
        </authorList>
    </citation>
    <scope>NUCLEOTIDE SEQUENCE [LARGE SCALE GENOMIC DNA]</scope>
    <source>
        <strain>K12 / MC4100 / BW2952</strain>
    </source>
</reference>
<evidence type="ECO:0000255" key="1">
    <source>
        <dbReference type="HAMAP-Rule" id="MF_00581"/>
    </source>
</evidence>
<gene>
    <name evidence="1" type="primary">argG</name>
    <name type="ordered locus">BWG_2875</name>
</gene>
<organism>
    <name type="scientific">Escherichia coli (strain K12 / MC4100 / BW2952)</name>
    <dbReference type="NCBI Taxonomy" id="595496"/>
    <lineage>
        <taxon>Bacteria</taxon>
        <taxon>Pseudomonadati</taxon>
        <taxon>Pseudomonadota</taxon>
        <taxon>Gammaproteobacteria</taxon>
        <taxon>Enterobacterales</taxon>
        <taxon>Enterobacteriaceae</taxon>
        <taxon>Escherichia</taxon>
    </lineage>
</organism>
<proteinExistence type="inferred from homology"/>
<name>ASSY_ECOBW</name>
<dbReference type="EC" id="6.3.4.5" evidence="1"/>
<dbReference type="EMBL" id="CP001396">
    <property type="protein sequence ID" value="ACR62011.1"/>
    <property type="molecule type" value="Genomic_DNA"/>
</dbReference>
<dbReference type="RefSeq" id="WP_000207680.1">
    <property type="nucleotide sequence ID" value="NC_012759.1"/>
</dbReference>
<dbReference type="SMR" id="C4ZSR2"/>
<dbReference type="KEGG" id="ebw:BWG_2875"/>
<dbReference type="HOGENOM" id="CLU_032784_4_1_6"/>
<dbReference type="UniPathway" id="UPA00068">
    <property type="reaction ID" value="UER00113"/>
</dbReference>
<dbReference type="GO" id="GO:0005737">
    <property type="term" value="C:cytoplasm"/>
    <property type="evidence" value="ECO:0007669"/>
    <property type="project" value="UniProtKB-SubCell"/>
</dbReference>
<dbReference type="GO" id="GO:0004055">
    <property type="term" value="F:argininosuccinate synthase activity"/>
    <property type="evidence" value="ECO:0007669"/>
    <property type="project" value="UniProtKB-UniRule"/>
</dbReference>
<dbReference type="GO" id="GO:0005524">
    <property type="term" value="F:ATP binding"/>
    <property type="evidence" value="ECO:0007669"/>
    <property type="project" value="UniProtKB-UniRule"/>
</dbReference>
<dbReference type="GO" id="GO:0042803">
    <property type="term" value="F:protein homodimerization activity"/>
    <property type="evidence" value="ECO:0007669"/>
    <property type="project" value="InterPro"/>
</dbReference>
<dbReference type="GO" id="GO:0000053">
    <property type="term" value="P:argininosuccinate metabolic process"/>
    <property type="evidence" value="ECO:0007669"/>
    <property type="project" value="TreeGrafter"/>
</dbReference>
<dbReference type="GO" id="GO:0006526">
    <property type="term" value="P:L-arginine biosynthetic process"/>
    <property type="evidence" value="ECO:0007669"/>
    <property type="project" value="UniProtKB-UniRule"/>
</dbReference>
<dbReference type="GO" id="GO:0000050">
    <property type="term" value="P:urea cycle"/>
    <property type="evidence" value="ECO:0007669"/>
    <property type="project" value="TreeGrafter"/>
</dbReference>
<dbReference type="CDD" id="cd01999">
    <property type="entry name" value="ASS"/>
    <property type="match status" value="1"/>
</dbReference>
<dbReference type="FunFam" id="1.10.287.400:FF:000001">
    <property type="entry name" value="Argininosuccinate synthase"/>
    <property type="match status" value="1"/>
</dbReference>
<dbReference type="Gene3D" id="1.10.287.400">
    <property type="match status" value="1"/>
</dbReference>
<dbReference type="Gene3D" id="3.90.1260.10">
    <property type="entry name" value="Argininosuccinate synthetase, chain A, domain 2"/>
    <property type="match status" value="1"/>
</dbReference>
<dbReference type="Gene3D" id="3.40.50.620">
    <property type="entry name" value="HUPs"/>
    <property type="match status" value="1"/>
</dbReference>
<dbReference type="HAMAP" id="MF_00581">
    <property type="entry name" value="Arg_succ_synth_type2"/>
    <property type="match status" value="1"/>
</dbReference>
<dbReference type="InterPro" id="IPR023437">
    <property type="entry name" value="Arg_succ_synth_type2_subfam"/>
</dbReference>
<dbReference type="InterPro" id="IPR048268">
    <property type="entry name" value="Arginosuc_syn_C"/>
</dbReference>
<dbReference type="InterPro" id="IPR048267">
    <property type="entry name" value="Arginosuc_syn_N"/>
</dbReference>
<dbReference type="InterPro" id="IPR001518">
    <property type="entry name" value="Arginosuc_synth"/>
</dbReference>
<dbReference type="InterPro" id="IPR018223">
    <property type="entry name" value="Arginosuc_synth_CS"/>
</dbReference>
<dbReference type="InterPro" id="IPR023434">
    <property type="entry name" value="Arginosuc_synth_type_1_subfam"/>
</dbReference>
<dbReference type="InterPro" id="IPR024074">
    <property type="entry name" value="AS_cat/multimer_dom_body"/>
</dbReference>
<dbReference type="InterPro" id="IPR024073">
    <property type="entry name" value="AS_multimer_C_tail"/>
</dbReference>
<dbReference type="InterPro" id="IPR014729">
    <property type="entry name" value="Rossmann-like_a/b/a_fold"/>
</dbReference>
<dbReference type="NCBIfam" id="TIGR00032">
    <property type="entry name" value="argG"/>
    <property type="match status" value="1"/>
</dbReference>
<dbReference type="NCBIfam" id="NF003779">
    <property type="entry name" value="PRK05370.1"/>
    <property type="match status" value="1"/>
</dbReference>
<dbReference type="PANTHER" id="PTHR11587">
    <property type="entry name" value="ARGININOSUCCINATE SYNTHASE"/>
    <property type="match status" value="1"/>
</dbReference>
<dbReference type="PANTHER" id="PTHR11587:SF2">
    <property type="entry name" value="ARGININOSUCCINATE SYNTHASE"/>
    <property type="match status" value="1"/>
</dbReference>
<dbReference type="Pfam" id="PF20979">
    <property type="entry name" value="Arginosuc_syn_C"/>
    <property type="match status" value="1"/>
</dbReference>
<dbReference type="Pfam" id="PF00764">
    <property type="entry name" value="Arginosuc_synth"/>
    <property type="match status" value="1"/>
</dbReference>
<dbReference type="SUPFAM" id="SSF52402">
    <property type="entry name" value="Adenine nucleotide alpha hydrolases-like"/>
    <property type="match status" value="1"/>
</dbReference>
<dbReference type="SUPFAM" id="SSF69864">
    <property type="entry name" value="Argininosuccinate synthetase, C-terminal domain"/>
    <property type="match status" value="1"/>
</dbReference>
<dbReference type="PROSITE" id="PS00564">
    <property type="entry name" value="ARGININOSUCCIN_SYN_1"/>
    <property type="match status" value="1"/>
</dbReference>
<dbReference type="PROSITE" id="PS00565">
    <property type="entry name" value="ARGININOSUCCIN_SYN_2"/>
    <property type="match status" value="1"/>
</dbReference>
<accession>C4ZSR2</accession>
<sequence length="447" mass="49898">MTTILKHLPVGQRIGIAFSGGLDTSAALLWMRQKGAVPYAYTANLGQPDEEDYDAIPRRAMEYGAENARLIDCRKQLVAEGIAAIQCGAFHNTTGGLTYFNTTPLGRAVTGTMLVAAMKEDGVNIWGDGSTYKGNDIERFYRYGLLTNAELQIYKPWLDTDFIDELGGRHEMSEFMIACGFDYKMSVEKAYSTDSNMLGATHEAKDLEYLNSSVKIVNPIMGVKFWDESVKIPAEEVTVRFEQGHPVALNGKTFSDDVEMMLEANRIGGRHGLGMSDQIENRIIEAKSRGIYEAPGMALLHIAYERLLTGIHNEDTIEQYHAHGRQLGRLLYQGRWFDSQALMLRDSLQRWVASQITGEVTLELRRGNDYSILNTVSENLTYKPERLTMEKGDSVFSPDDRIGQLTMRNLDITDTREKLFGYAKTGLLSSSAASGVPQVENLENKGQ</sequence>